<evidence type="ECO:0000255" key="1"/>
<evidence type="ECO:0000303" key="2">
    <source>
    </source>
</evidence>
<evidence type="ECO:0000305" key="3"/>
<dbReference type="EC" id="1.14.11.-"/>
<dbReference type="EMBL" id="AC122863">
    <property type="status" value="NOT_ANNOTATED_CDS"/>
    <property type="molecule type" value="Genomic_DNA"/>
</dbReference>
<dbReference type="EMBL" id="BC111101">
    <property type="protein sequence ID" value="AAI11102.1"/>
    <property type="molecule type" value="mRNA"/>
</dbReference>
<dbReference type="CCDS" id="CCDS40134.1">
    <molecule id="Q2TA57-2"/>
</dbReference>
<dbReference type="CCDS" id="CCDS85417.1">
    <molecule id="Q2TA57-1"/>
</dbReference>
<dbReference type="RefSeq" id="NP_001034734.1">
    <molecule id="Q2TA57-2"/>
    <property type="nucleotide sequence ID" value="NM_001039645.2"/>
</dbReference>
<dbReference type="RefSeq" id="NP_001334586.1">
    <molecule id="Q2TA57-1"/>
    <property type="nucleotide sequence ID" value="NM_001347657.2"/>
</dbReference>
<dbReference type="RefSeq" id="NP_001348417.1">
    <molecule id="Q2TA57-2"/>
    <property type="nucleotide sequence ID" value="NM_001361488.1"/>
</dbReference>
<dbReference type="SMR" id="Q2TA57"/>
<dbReference type="FunCoup" id="Q2TA57">
    <property type="interactions" value="20"/>
</dbReference>
<dbReference type="STRING" id="10090.ENSMUSP00000101947"/>
<dbReference type="PhosphoSitePlus" id="Q2TA57"/>
<dbReference type="PaxDb" id="10090-ENSMUSP00000101946"/>
<dbReference type="ProteomicsDB" id="281922">
    <molecule id="Q2TA57-1"/>
</dbReference>
<dbReference type="ProteomicsDB" id="281923">
    <molecule id="Q2TA57-2"/>
</dbReference>
<dbReference type="Antibodypedia" id="26891">
    <property type="antibodies" value="51 antibodies from 12 providers"/>
</dbReference>
<dbReference type="Ensembl" id="ENSMUST00000052937.12">
    <molecule id="Q2TA57-2"/>
    <property type="protein sequence ID" value="ENSMUSP00000049848.6"/>
    <property type="gene ID" value="ENSMUSG00000046378.12"/>
</dbReference>
<dbReference type="Ensembl" id="ENSMUST00000106339.2">
    <molecule id="Q2TA57-2"/>
    <property type="protein sequence ID" value="ENSMUSP00000101946.2"/>
    <property type="gene ID" value="ENSMUSG00000046378.12"/>
</dbReference>
<dbReference type="Ensembl" id="ENSMUST00000106340.8">
    <molecule id="Q2TA57-1"/>
    <property type="protein sequence ID" value="ENSMUSP00000101947.2"/>
    <property type="gene ID" value="ENSMUSG00000046378.12"/>
</dbReference>
<dbReference type="GeneID" id="233879"/>
<dbReference type="KEGG" id="mmu:233879"/>
<dbReference type="UCSC" id="uc009jtn.1">
    <molecule id="Q2TA57-1"/>
    <property type="organism name" value="mouse"/>
</dbReference>
<dbReference type="UCSC" id="uc009jto.1">
    <molecule id="Q2TA57-2"/>
    <property type="organism name" value="mouse"/>
</dbReference>
<dbReference type="AGR" id="MGI:2685014"/>
<dbReference type="CTD" id="253982"/>
<dbReference type="MGI" id="MGI:2685014">
    <property type="gene designation" value="Asphd1"/>
</dbReference>
<dbReference type="VEuPathDB" id="HostDB:ENSMUSG00000046378"/>
<dbReference type="eggNOG" id="KOG3696">
    <property type="taxonomic scope" value="Eukaryota"/>
</dbReference>
<dbReference type="GeneTree" id="ENSGT00940000161676"/>
<dbReference type="HOGENOM" id="CLU_059279_3_0_1"/>
<dbReference type="InParanoid" id="Q2TA57"/>
<dbReference type="OMA" id="WGLEDAP"/>
<dbReference type="OrthoDB" id="438431at2759"/>
<dbReference type="PhylomeDB" id="Q2TA57"/>
<dbReference type="BioGRID-ORCS" id="233879">
    <property type="hits" value="0 hits in 78 CRISPR screens"/>
</dbReference>
<dbReference type="PRO" id="PR:Q2TA57"/>
<dbReference type="Proteomes" id="UP000000589">
    <property type="component" value="Chromosome 7"/>
</dbReference>
<dbReference type="RNAct" id="Q2TA57">
    <property type="molecule type" value="protein"/>
</dbReference>
<dbReference type="Bgee" id="ENSMUSG00000046378">
    <property type="expression patterns" value="Expressed in visual cortex and 87 other cell types or tissues"/>
</dbReference>
<dbReference type="GO" id="GO:0016020">
    <property type="term" value="C:membrane"/>
    <property type="evidence" value="ECO:0007669"/>
    <property type="project" value="UniProtKB-SubCell"/>
</dbReference>
<dbReference type="GO" id="GO:0051213">
    <property type="term" value="F:dioxygenase activity"/>
    <property type="evidence" value="ECO:0007669"/>
    <property type="project" value="UniProtKB-KW"/>
</dbReference>
<dbReference type="Gene3D" id="2.60.120.330">
    <property type="entry name" value="B-lactam Antibiotic, Isopenicillin N Synthase, Chain"/>
    <property type="match status" value="1"/>
</dbReference>
<dbReference type="InterPro" id="IPR007803">
    <property type="entry name" value="Asp/Arg/Pro-Hydrxlase"/>
</dbReference>
<dbReference type="InterPro" id="IPR051821">
    <property type="entry name" value="Asp/Asn_beta-hydroxylase"/>
</dbReference>
<dbReference type="InterPro" id="IPR027443">
    <property type="entry name" value="IPNS-like_sf"/>
</dbReference>
<dbReference type="PANTHER" id="PTHR46332:SF1">
    <property type="entry name" value="ASPARTATE BETA-HYDROXYLASE DOMAIN-CONTAINING PROTEIN 1"/>
    <property type="match status" value="1"/>
</dbReference>
<dbReference type="PANTHER" id="PTHR46332">
    <property type="entry name" value="ASPARTATE BETA-HYDROXYLASE DOMAIN-CONTAINING PROTEIN 2"/>
    <property type="match status" value="1"/>
</dbReference>
<dbReference type="Pfam" id="PF05118">
    <property type="entry name" value="Asp_Arg_Hydrox"/>
    <property type="match status" value="1"/>
</dbReference>
<dbReference type="SUPFAM" id="SSF51197">
    <property type="entry name" value="Clavaminate synthase-like"/>
    <property type="match status" value="1"/>
</dbReference>
<reference key="1">
    <citation type="journal article" date="2009" name="PLoS Biol.">
        <title>Lineage-specific biology revealed by a finished genome assembly of the mouse.</title>
        <authorList>
            <person name="Church D.M."/>
            <person name="Goodstadt L."/>
            <person name="Hillier L.W."/>
            <person name="Zody M.C."/>
            <person name="Goldstein S."/>
            <person name="She X."/>
            <person name="Bult C.J."/>
            <person name="Agarwala R."/>
            <person name="Cherry J.L."/>
            <person name="DiCuccio M."/>
            <person name="Hlavina W."/>
            <person name="Kapustin Y."/>
            <person name="Meric P."/>
            <person name="Maglott D."/>
            <person name="Birtle Z."/>
            <person name="Marques A.C."/>
            <person name="Graves T."/>
            <person name="Zhou S."/>
            <person name="Teague B."/>
            <person name="Potamousis K."/>
            <person name="Churas C."/>
            <person name="Place M."/>
            <person name="Herschleb J."/>
            <person name="Runnheim R."/>
            <person name="Forrest D."/>
            <person name="Amos-Landgraf J."/>
            <person name="Schwartz D.C."/>
            <person name="Cheng Z."/>
            <person name="Lindblad-Toh K."/>
            <person name="Eichler E.E."/>
            <person name="Ponting C.P."/>
        </authorList>
    </citation>
    <scope>NUCLEOTIDE SEQUENCE [LARGE SCALE GENOMIC DNA]</scope>
    <source>
        <strain>C57BL/6J</strain>
    </source>
</reference>
<reference key="2">
    <citation type="journal article" date="2004" name="Genome Res.">
        <title>The status, quality, and expansion of the NIH full-length cDNA project: the Mammalian Gene Collection (MGC).</title>
        <authorList>
            <consortium name="The MGC Project Team"/>
        </authorList>
    </citation>
    <scope>NUCLEOTIDE SEQUENCE [LARGE SCALE MRNA] (ISOFORM 2)</scope>
</reference>
<comment type="subcellular location">
    <subcellularLocation>
        <location evidence="3">Membrane</location>
        <topology evidence="3">Single-pass type II membrane protein</topology>
    </subcellularLocation>
</comment>
<comment type="alternative products">
    <event type="alternative splicing"/>
    <isoform>
        <id>Q2TA57-1</id>
        <name>1</name>
        <sequence type="displayed"/>
    </isoform>
    <isoform>
        <id>Q2TA57-2</id>
        <name>2</name>
        <sequence type="described" ref="VSP_039171"/>
    </isoform>
</comment>
<comment type="similarity">
    <text evidence="3">Belongs to the aspartyl/asparaginyl beta-hydroxylase family.</text>
</comment>
<keyword id="KW-0025">Alternative splicing</keyword>
<keyword id="KW-0223">Dioxygenase</keyword>
<keyword id="KW-0472">Membrane</keyword>
<keyword id="KW-0560">Oxidoreductase</keyword>
<keyword id="KW-1185">Reference proteome</keyword>
<keyword id="KW-0735">Signal-anchor</keyword>
<keyword id="KW-0812">Transmembrane</keyword>
<keyword id="KW-1133">Transmembrane helix</keyword>
<proteinExistence type="evidence at transcript level"/>
<organism>
    <name type="scientific">Mus musculus</name>
    <name type="common">Mouse</name>
    <dbReference type="NCBI Taxonomy" id="10090"/>
    <lineage>
        <taxon>Eukaryota</taxon>
        <taxon>Metazoa</taxon>
        <taxon>Chordata</taxon>
        <taxon>Craniata</taxon>
        <taxon>Vertebrata</taxon>
        <taxon>Euteleostomi</taxon>
        <taxon>Mammalia</taxon>
        <taxon>Eutheria</taxon>
        <taxon>Euarchontoglires</taxon>
        <taxon>Glires</taxon>
        <taxon>Rodentia</taxon>
        <taxon>Myomorpha</taxon>
        <taxon>Muroidea</taxon>
        <taxon>Muridae</taxon>
        <taxon>Murinae</taxon>
        <taxon>Mus</taxon>
        <taxon>Mus</taxon>
    </lineage>
</organism>
<name>ASPH1_MOUSE</name>
<gene>
    <name type="primary">Asphd1</name>
</gene>
<protein>
    <recommendedName>
        <fullName>Aspartate beta-hydroxylase domain-containing protein 1</fullName>
        <ecNumber>1.14.11.-</ecNumber>
    </recommendedName>
</protein>
<feature type="chain" id="PRO_0000394142" description="Aspartate beta-hydroxylase domain-containing protein 1">
    <location>
        <begin position="1"/>
        <end position="360"/>
    </location>
</feature>
<feature type="topological domain" description="Cytoplasmic" evidence="1">
    <location>
        <begin position="1"/>
        <end position="45"/>
    </location>
</feature>
<feature type="transmembrane region" description="Helical" evidence="1">
    <location>
        <begin position="46"/>
        <end position="68"/>
    </location>
</feature>
<feature type="topological domain" description="Lumenal" evidence="1">
    <location>
        <begin position="69"/>
        <end position="360"/>
    </location>
</feature>
<feature type="splice variant" id="VSP_039171" description="In isoform 2." evidence="2">
    <location>
        <begin position="1"/>
        <end position="251"/>
    </location>
</feature>
<accession>Q2TA57</accession>
<sequence>MWKGGNQEAVIEGSGGELGVPGSWGLQDAACHLARASLPIMFPWPLPLGSSALTMLLGALTSLFLWYCYRLGSQDMQALGTGSRAGGVSGMPDVCSQTGPRGLGDSGEGPRAEGLVSRRLRAYARRYSWAGMGRVRRAAQGGSGLTGGAGVMGIQRPGLLFLPDLPSSPFVPRDAQRHDVELLQSSFPAILRDFGAVSWDFSGTTPLPRGWSPPLAPGCYQLLLYQAGRCQPSNCRRCPGAYRALRGLRSFMSANTFGNAGFSVLLPGARLEGRCGPTNARVRCHLGLKIPPGCELVVGGEPQCWAEGHCLLVDDSFLHTVAHNGSPEDGPRVVFIVDLWHPNVAGAERQALDFVFAPDP</sequence>